<comment type="function">
    <text evidence="1">Involved in the biosynthesis of the osmoprotectant glycine betaine. Catalyzes the oxidation of choline to betaine aldehyde and betaine aldehyde to glycine betaine at the same rate.</text>
</comment>
<comment type="catalytic activity">
    <reaction evidence="1">
        <text>choline + A = betaine aldehyde + AH2</text>
        <dbReference type="Rhea" id="RHEA:17433"/>
        <dbReference type="ChEBI" id="CHEBI:13193"/>
        <dbReference type="ChEBI" id="CHEBI:15354"/>
        <dbReference type="ChEBI" id="CHEBI:15710"/>
        <dbReference type="ChEBI" id="CHEBI:17499"/>
        <dbReference type="EC" id="1.1.99.1"/>
    </reaction>
</comment>
<comment type="catalytic activity">
    <reaction evidence="1">
        <text>betaine aldehyde + NAD(+) + H2O = glycine betaine + NADH + 2 H(+)</text>
        <dbReference type="Rhea" id="RHEA:15305"/>
        <dbReference type="ChEBI" id="CHEBI:15377"/>
        <dbReference type="ChEBI" id="CHEBI:15378"/>
        <dbReference type="ChEBI" id="CHEBI:15710"/>
        <dbReference type="ChEBI" id="CHEBI:17750"/>
        <dbReference type="ChEBI" id="CHEBI:57540"/>
        <dbReference type="ChEBI" id="CHEBI:57945"/>
        <dbReference type="EC" id="1.2.1.8"/>
    </reaction>
</comment>
<comment type="cofactor">
    <cofactor evidence="1">
        <name>FAD</name>
        <dbReference type="ChEBI" id="CHEBI:57692"/>
    </cofactor>
</comment>
<comment type="pathway">
    <text evidence="1">Amine and polyamine biosynthesis; betaine biosynthesis via choline pathway; betaine aldehyde from choline (cytochrome c reductase route): step 1/1.</text>
</comment>
<comment type="similarity">
    <text evidence="1">Belongs to the GMC oxidoreductase family.</text>
</comment>
<dbReference type="EC" id="1.1.99.1" evidence="1"/>
<dbReference type="EC" id="1.2.1.8" evidence="1"/>
<dbReference type="EMBL" id="FM209186">
    <property type="protein sequence ID" value="CAW30521.1"/>
    <property type="molecule type" value="Genomic_DNA"/>
</dbReference>
<dbReference type="RefSeq" id="WP_003104848.1">
    <property type="nucleotide sequence ID" value="NC_011770.1"/>
</dbReference>
<dbReference type="SMR" id="B7V5R3"/>
<dbReference type="KEGG" id="pag:PLES_57671"/>
<dbReference type="HOGENOM" id="CLU_002865_7_1_6"/>
<dbReference type="UniPathway" id="UPA00529">
    <property type="reaction ID" value="UER00385"/>
</dbReference>
<dbReference type="GO" id="GO:0016020">
    <property type="term" value="C:membrane"/>
    <property type="evidence" value="ECO:0007669"/>
    <property type="project" value="TreeGrafter"/>
</dbReference>
<dbReference type="GO" id="GO:0008802">
    <property type="term" value="F:betaine-aldehyde dehydrogenase (NAD+) activity"/>
    <property type="evidence" value="ECO:0007669"/>
    <property type="project" value="UniProtKB-EC"/>
</dbReference>
<dbReference type="GO" id="GO:0008812">
    <property type="term" value="F:choline dehydrogenase activity"/>
    <property type="evidence" value="ECO:0007669"/>
    <property type="project" value="UniProtKB-UniRule"/>
</dbReference>
<dbReference type="GO" id="GO:0050660">
    <property type="term" value="F:flavin adenine dinucleotide binding"/>
    <property type="evidence" value="ECO:0007669"/>
    <property type="project" value="InterPro"/>
</dbReference>
<dbReference type="GO" id="GO:0019285">
    <property type="term" value="P:glycine betaine biosynthetic process from choline"/>
    <property type="evidence" value="ECO:0007669"/>
    <property type="project" value="UniProtKB-UniRule"/>
</dbReference>
<dbReference type="Gene3D" id="3.50.50.60">
    <property type="entry name" value="FAD/NAD(P)-binding domain"/>
    <property type="match status" value="1"/>
</dbReference>
<dbReference type="Gene3D" id="3.30.560.10">
    <property type="entry name" value="Glucose Oxidase, domain 3"/>
    <property type="match status" value="1"/>
</dbReference>
<dbReference type="HAMAP" id="MF_00750">
    <property type="entry name" value="Choline_dehydrogen"/>
    <property type="match status" value="1"/>
</dbReference>
<dbReference type="InterPro" id="IPR011533">
    <property type="entry name" value="BetA"/>
</dbReference>
<dbReference type="InterPro" id="IPR036188">
    <property type="entry name" value="FAD/NAD-bd_sf"/>
</dbReference>
<dbReference type="InterPro" id="IPR012132">
    <property type="entry name" value="GMC_OxRdtase"/>
</dbReference>
<dbReference type="InterPro" id="IPR000172">
    <property type="entry name" value="GMC_OxRdtase_N"/>
</dbReference>
<dbReference type="InterPro" id="IPR007867">
    <property type="entry name" value="GMC_OxRtase_C"/>
</dbReference>
<dbReference type="NCBIfam" id="TIGR01810">
    <property type="entry name" value="betA"/>
    <property type="match status" value="1"/>
</dbReference>
<dbReference type="NCBIfam" id="NF002550">
    <property type="entry name" value="PRK02106.1"/>
    <property type="match status" value="1"/>
</dbReference>
<dbReference type="PANTHER" id="PTHR11552:SF147">
    <property type="entry name" value="CHOLINE DEHYDROGENASE, MITOCHONDRIAL"/>
    <property type="match status" value="1"/>
</dbReference>
<dbReference type="PANTHER" id="PTHR11552">
    <property type="entry name" value="GLUCOSE-METHANOL-CHOLINE GMC OXIDOREDUCTASE"/>
    <property type="match status" value="1"/>
</dbReference>
<dbReference type="Pfam" id="PF05199">
    <property type="entry name" value="GMC_oxred_C"/>
    <property type="match status" value="1"/>
</dbReference>
<dbReference type="Pfam" id="PF00732">
    <property type="entry name" value="GMC_oxred_N"/>
    <property type="match status" value="1"/>
</dbReference>
<dbReference type="PIRSF" id="PIRSF000137">
    <property type="entry name" value="Alcohol_oxidase"/>
    <property type="match status" value="1"/>
</dbReference>
<dbReference type="SUPFAM" id="SSF54373">
    <property type="entry name" value="FAD-linked reductases, C-terminal domain"/>
    <property type="match status" value="1"/>
</dbReference>
<dbReference type="SUPFAM" id="SSF51905">
    <property type="entry name" value="FAD/NAD(P)-binding domain"/>
    <property type="match status" value="1"/>
</dbReference>
<dbReference type="PROSITE" id="PS00623">
    <property type="entry name" value="GMC_OXRED_1"/>
    <property type="match status" value="1"/>
</dbReference>
<dbReference type="PROSITE" id="PS00624">
    <property type="entry name" value="GMC_OXRED_2"/>
    <property type="match status" value="1"/>
</dbReference>
<protein>
    <recommendedName>
        <fullName evidence="1">Oxygen-dependent choline dehydrogenase</fullName>
        <shortName evidence="1">CDH</shortName>
        <shortName evidence="1">CHD</shortName>
        <ecNumber evidence="1">1.1.99.1</ecNumber>
    </recommendedName>
    <alternativeName>
        <fullName evidence="1">Betaine aldehyde dehydrogenase</fullName>
        <shortName evidence="1">BADH</shortName>
        <ecNumber evidence="1">1.2.1.8</ecNumber>
    </alternativeName>
</protein>
<proteinExistence type="inferred from homology"/>
<accession>B7V5R3</accession>
<gene>
    <name evidence="1" type="primary">betA</name>
    <name type="ordered locus">PLES_57671</name>
</gene>
<feature type="chain" id="PRO_1000133335" description="Oxygen-dependent choline dehydrogenase">
    <location>
        <begin position="1"/>
        <end position="561"/>
    </location>
</feature>
<feature type="active site" description="Proton acceptor" evidence="1">
    <location>
        <position position="475"/>
    </location>
</feature>
<feature type="binding site" evidence="1">
    <location>
        <begin position="6"/>
        <end position="35"/>
    </location>
    <ligand>
        <name>FAD</name>
        <dbReference type="ChEBI" id="CHEBI:57692"/>
    </ligand>
</feature>
<evidence type="ECO:0000255" key="1">
    <source>
        <dbReference type="HAMAP-Rule" id="MF_00750"/>
    </source>
</evidence>
<reference key="1">
    <citation type="journal article" date="2009" name="Genome Res.">
        <title>Newly introduced genomic prophage islands are critical determinants of in vivo competitiveness in the Liverpool epidemic strain of Pseudomonas aeruginosa.</title>
        <authorList>
            <person name="Winstanley C."/>
            <person name="Langille M.G.I."/>
            <person name="Fothergill J.L."/>
            <person name="Kukavica-Ibrulj I."/>
            <person name="Paradis-Bleau C."/>
            <person name="Sanschagrin F."/>
            <person name="Thomson N.R."/>
            <person name="Winsor G.L."/>
            <person name="Quail M.A."/>
            <person name="Lennard N."/>
            <person name="Bignell A."/>
            <person name="Clarke L."/>
            <person name="Seeger K."/>
            <person name="Saunders D."/>
            <person name="Harris D."/>
            <person name="Parkhill J."/>
            <person name="Hancock R.E.W."/>
            <person name="Brinkman F.S.L."/>
            <person name="Levesque R.C."/>
        </authorList>
    </citation>
    <scope>NUCLEOTIDE SEQUENCE [LARGE SCALE GENOMIC DNA]</scope>
    <source>
        <strain>LESB58</strain>
    </source>
</reference>
<organism>
    <name type="scientific">Pseudomonas aeruginosa (strain LESB58)</name>
    <dbReference type="NCBI Taxonomy" id="557722"/>
    <lineage>
        <taxon>Bacteria</taxon>
        <taxon>Pseudomonadati</taxon>
        <taxon>Pseudomonadota</taxon>
        <taxon>Gammaproteobacteria</taxon>
        <taxon>Pseudomonadales</taxon>
        <taxon>Pseudomonadaceae</taxon>
        <taxon>Pseudomonas</taxon>
    </lineage>
</organism>
<sequence>MSQEFDYIIIGAGSAGNVLATRLTEDADVSVLLLEAGGPDYRFDFRTQMPAALAFPLQGRRYNWAYETDPEPYMNNRRMECGRGKGLGGSSLINGMCYIRGNALDFDGWAKEPGLEDWSYLDCLPYFRKAETRDIGPNDYHGGDGPVSVTTPKAGNNPLFHAMVEAGVQAGYPRTDDLNGYQQEGFGPMDRTVTPEGRRAATGRGYLDQARGRPNLTIVTHALSDRILFSGKRAIGVSYLVGNGDNPVTAHARREVLVCSGAIASPQLLQRSGVGPAALLRDLDIPVVHDLPGVGANLQDHLELYLQYACKQPVSIYPATKWWNQPAIGAQWLFLGKGLGASNQFEAGGFIRTREAFEWPNIQFHFLPVAINYNGSKGVQEHGFQAHMGSMRSPSRGRIHLKSRDPRQHPSILFNYMSHEQDWQEFRDGIRLTREIMNQPALDPYRGRELSPGVSVQSDAELDEFIRNHAETAFHPSCSCKMGSDDMAVVDGQGRVHGMEGLRVVDASIMPLIITGNLNATTIMMAEKIADRIRGRQPLPRSTAKYYVAGDAPVRGNPVRA</sequence>
<name>BETA_PSEA8</name>
<keyword id="KW-0274">FAD</keyword>
<keyword id="KW-0285">Flavoprotein</keyword>
<keyword id="KW-0520">NAD</keyword>
<keyword id="KW-0560">Oxidoreductase</keyword>